<accession>D3E3E4</accession>
<sequence>MKQHSVGRVETKTFAINDKLKLSSGKTLENVELAYETYGELNTAKTNAILVCHALTGDAHAAGWHKNATKPGWWEIVIGPGKALDTDKYFVICSNVLGGCKGSTGPASINPKTNEEYALDFPIITIEDMVHAQKKLIEHLGIEKLHAVVGGSMGGMQALQWTVSYPNMMKKASIIATTARSSPQQIAFNEVGRQSIISDPFWNNGQYYGKNRTPRSGLAVARMIGHITYLSDESMYIKFGRELQDKDQLSYDFTLDFQVESYLHHQGESFVKRFDANSYLYITKAVDYFDLSVDGSLPDGLKNVKAKFQIIAVDSDWLYPVDQSKDLLTALQTLGVEVSYNEVKSDYGHDAFLLENGQMNFLLNNFLSENVVDDLMKTDVPTIDINSTIKDAANIMFDNQVTHLPVVDENDKLLGIVTAWDLSKSIAKDCKLLEDVMTKDVRYCKSTDSIEYISRQMKKFDISCLPVVNDDLCLEGIITTDQISHLISSY</sequence>
<name>METXA_METRM</name>
<protein>
    <recommendedName>
        <fullName evidence="1">Homoserine O-acetyltransferase</fullName>
        <shortName evidence="1 3">HAT</shortName>
        <ecNumber evidence="1 2">2.3.1.31</ecNumber>
    </recommendedName>
    <alternativeName>
        <fullName evidence="1">Homoserine transacetylase</fullName>
        <shortName evidence="1">HTA</shortName>
    </alternativeName>
</protein>
<keyword id="KW-0012">Acyltransferase</keyword>
<keyword id="KW-0028">Amino-acid biosynthesis</keyword>
<keyword id="KW-0129">CBS domain</keyword>
<keyword id="KW-0963">Cytoplasm</keyword>
<keyword id="KW-0486">Methionine biosynthesis</keyword>
<keyword id="KW-0677">Repeat</keyword>
<keyword id="KW-0808">Transferase</keyword>
<feature type="chain" id="PRO_0000440292" description="Homoserine O-acetyltransferase">
    <location>
        <begin position="1"/>
        <end position="490"/>
    </location>
</feature>
<feature type="domain" description="AB hydrolase-1" evidence="1">
    <location>
        <begin position="47"/>
        <end position="355"/>
    </location>
</feature>
<feature type="domain" description="CBS 1" evidence="1">
    <location>
        <begin position="376"/>
        <end position="436"/>
    </location>
</feature>
<feature type="domain" description="CBS 2" evidence="1">
    <location>
        <begin position="437"/>
        <end position="490"/>
    </location>
</feature>
<feature type="active site" description="Nucleophile" evidence="1">
    <location>
        <position position="152"/>
    </location>
</feature>
<feature type="active site" evidence="1">
    <location>
        <position position="316"/>
    </location>
</feature>
<feature type="active site" evidence="1">
    <location>
        <position position="349"/>
    </location>
</feature>
<feature type="binding site" evidence="1">
    <location>
        <position position="222"/>
    </location>
    <ligand>
        <name>substrate</name>
    </ligand>
</feature>
<feature type="binding site" evidence="1">
    <location>
        <position position="350"/>
    </location>
    <ligand>
        <name>substrate</name>
    </ligand>
</feature>
<gene>
    <name evidence="1 3" type="primary">metXA</name>
    <name evidence="4" type="synonym">metX2</name>
    <name evidence="4" type="ordered locus">mru_1205</name>
</gene>
<reference key="1">
    <citation type="journal article" date="2010" name="PLoS ONE">
        <title>The genome sequence of the rumen methanogen Methanobrevibacter ruminantium reveals new possibilities for controlling ruminant methane emissions.</title>
        <authorList>
            <person name="Leahy S.C."/>
            <person name="Kelly W.J."/>
            <person name="Altermann E."/>
            <person name="Ronimus R.S."/>
            <person name="Yeoman C.J."/>
            <person name="Pacheco D.M."/>
            <person name="Li D."/>
            <person name="Kong Z."/>
            <person name="McTavish S."/>
            <person name="Sang C."/>
            <person name="Lambie S.C."/>
            <person name="Janssen P.H."/>
            <person name="Dey D."/>
            <person name="Attwood G.T."/>
        </authorList>
    </citation>
    <scope>NUCLEOTIDE SEQUENCE [LARGE SCALE GENOMIC DNA]</scope>
    <source>
        <strain>ATCC 35063 / DSM 1093 / JCM 13430 / OCM 146 / M1</strain>
    </source>
</reference>
<reference key="2">
    <citation type="journal article" date="2017" name="Nat. Chem. Biol.">
        <title>Parallel evolution of non-homologous isofunctional enzymes in methionine biosynthesis.</title>
        <authorList>
            <person name="Bastard K."/>
            <person name="Perret A."/>
            <person name="Mariage A."/>
            <person name="Bessonnet T."/>
            <person name="Pinet-Turpault A."/>
            <person name="Petit J.L."/>
            <person name="Darii E."/>
            <person name="Bazire P."/>
            <person name="Vergne-Vaxelaire C."/>
            <person name="Brewee C."/>
            <person name="Debard A."/>
            <person name="Pellouin V."/>
            <person name="Besnard-Gonnet M."/>
            <person name="Artiguenave F."/>
            <person name="Medigue C."/>
            <person name="Vallenet D."/>
            <person name="Danchin A."/>
            <person name="Zaparucha A."/>
            <person name="Weissenbach J."/>
            <person name="Salanoubat M."/>
            <person name="de Berardinis V."/>
        </authorList>
    </citation>
    <scope>FUNCTION</scope>
    <scope>CATALYTIC ACTIVITY</scope>
</reference>
<comment type="function">
    <text evidence="1 2">Transfers an acetyl group from acetyl-CoA to L-homoserine, forming acetyl-L-homoserine.</text>
</comment>
<comment type="catalytic activity">
    <reaction evidence="1 2">
        <text>L-homoserine + acetyl-CoA = O-acetyl-L-homoserine + CoA</text>
        <dbReference type="Rhea" id="RHEA:13701"/>
        <dbReference type="ChEBI" id="CHEBI:57287"/>
        <dbReference type="ChEBI" id="CHEBI:57288"/>
        <dbReference type="ChEBI" id="CHEBI:57476"/>
        <dbReference type="ChEBI" id="CHEBI:57716"/>
        <dbReference type="EC" id="2.3.1.31"/>
    </reaction>
</comment>
<comment type="pathway">
    <text evidence="1">Amino-acid biosynthesis; L-methionine biosynthesis via de novo pathway; O-acetyl-L-homoserine from L-homoserine: step 1/1.</text>
</comment>
<comment type="subunit">
    <text evidence="1">Homodimer.</text>
</comment>
<comment type="subcellular location">
    <subcellularLocation>
        <location evidence="1">Cytoplasm</location>
    </subcellularLocation>
</comment>
<comment type="similarity">
    <text evidence="1">Belongs to the AB hydrolase superfamily. MetX family.</text>
</comment>
<evidence type="ECO:0000255" key="1">
    <source>
        <dbReference type="HAMAP-Rule" id="MF_00296"/>
    </source>
</evidence>
<evidence type="ECO:0000269" key="2">
    <source>
    </source>
</evidence>
<evidence type="ECO:0000303" key="3">
    <source>
    </source>
</evidence>
<evidence type="ECO:0000312" key="4">
    <source>
        <dbReference type="EMBL" id="ADC47055.1"/>
    </source>
</evidence>
<proteinExistence type="evidence at protein level"/>
<dbReference type="EC" id="2.3.1.31" evidence="1 2"/>
<dbReference type="EMBL" id="CP001719">
    <property type="protein sequence ID" value="ADC47055.1"/>
    <property type="molecule type" value="Genomic_DNA"/>
</dbReference>
<dbReference type="RefSeq" id="WP_012956004.1">
    <property type="nucleotide sequence ID" value="NC_013790.1"/>
</dbReference>
<dbReference type="SMR" id="D3E3E4"/>
<dbReference type="STRING" id="634498.mru_1205"/>
<dbReference type="ESTHER" id="metrm-metxa">
    <property type="family name" value="Homoserine_transacetylase"/>
</dbReference>
<dbReference type="GeneID" id="8770856"/>
<dbReference type="KEGG" id="mru:mru_1205"/>
<dbReference type="PATRIC" id="fig|634498.28.peg.1206"/>
<dbReference type="eggNOG" id="arCOG00627">
    <property type="taxonomic scope" value="Archaea"/>
</dbReference>
<dbReference type="HOGENOM" id="CLU_028760_1_1_2"/>
<dbReference type="OrthoDB" id="295172at2157"/>
<dbReference type="UniPathway" id="UPA00051">
    <property type="reaction ID" value="UER00074"/>
</dbReference>
<dbReference type="Proteomes" id="UP000008680">
    <property type="component" value="Chromosome"/>
</dbReference>
<dbReference type="GO" id="GO:0005737">
    <property type="term" value="C:cytoplasm"/>
    <property type="evidence" value="ECO:0007669"/>
    <property type="project" value="UniProtKB-SubCell"/>
</dbReference>
<dbReference type="GO" id="GO:0004414">
    <property type="term" value="F:homoserine O-acetyltransferase activity"/>
    <property type="evidence" value="ECO:0007669"/>
    <property type="project" value="UniProtKB-UniRule"/>
</dbReference>
<dbReference type="GO" id="GO:0009092">
    <property type="term" value="P:homoserine metabolic process"/>
    <property type="evidence" value="ECO:0007669"/>
    <property type="project" value="TreeGrafter"/>
</dbReference>
<dbReference type="GO" id="GO:0009086">
    <property type="term" value="P:methionine biosynthetic process"/>
    <property type="evidence" value="ECO:0007669"/>
    <property type="project" value="UniProtKB-UniRule"/>
</dbReference>
<dbReference type="CDD" id="cd04605">
    <property type="entry name" value="CBS_pair_arch_MET2_assoc"/>
    <property type="match status" value="1"/>
</dbReference>
<dbReference type="FunFam" id="1.10.1740.110:FF:000001">
    <property type="entry name" value="Homoserine O-acetyltransferase"/>
    <property type="match status" value="1"/>
</dbReference>
<dbReference type="Gene3D" id="1.10.1740.110">
    <property type="match status" value="1"/>
</dbReference>
<dbReference type="Gene3D" id="3.40.50.1820">
    <property type="entry name" value="alpha/beta hydrolase"/>
    <property type="match status" value="1"/>
</dbReference>
<dbReference type="Gene3D" id="3.10.580.10">
    <property type="entry name" value="CBS-domain"/>
    <property type="match status" value="1"/>
</dbReference>
<dbReference type="HAMAP" id="MF_00296">
    <property type="entry name" value="MetX_acyltransf"/>
    <property type="match status" value="1"/>
</dbReference>
<dbReference type="InterPro" id="IPR000073">
    <property type="entry name" value="AB_hydrolase_1"/>
</dbReference>
<dbReference type="InterPro" id="IPR029058">
    <property type="entry name" value="AB_hydrolase_fold"/>
</dbReference>
<dbReference type="InterPro" id="IPR000644">
    <property type="entry name" value="CBS_dom"/>
</dbReference>
<dbReference type="InterPro" id="IPR046342">
    <property type="entry name" value="CBS_dom_sf"/>
</dbReference>
<dbReference type="InterPro" id="IPR008220">
    <property type="entry name" value="HAT_MetX-like"/>
</dbReference>
<dbReference type="NCBIfam" id="TIGR01392">
    <property type="entry name" value="homoserO_Ac_trn"/>
    <property type="match status" value="1"/>
</dbReference>
<dbReference type="NCBIfam" id="NF001209">
    <property type="entry name" value="PRK00175.1"/>
    <property type="match status" value="1"/>
</dbReference>
<dbReference type="PANTHER" id="PTHR32268">
    <property type="entry name" value="HOMOSERINE O-ACETYLTRANSFERASE"/>
    <property type="match status" value="1"/>
</dbReference>
<dbReference type="PANTHER" id="PTHR32268:SF11">
    <property type="entry name" value="HOMOSERINE O-ACETYLTRANSFERASE"/>
    <property type="match status" value="1"/>
</dbReference>
<dbReference type="Pfam" id="PF00561">
    <property type="entry name" value="Abhydrolase_1"/>
    <property type="match status" value="1"/>
</dbReference>
<dbReference type="Pfam" id="PF00571">
    <property type="entry name" value="CBS"/>
    <property type="match status" value="2"/>
</dbReference>
<dbReference type="SMART" id="SM00116">
    <property type="entry name" value="CBS"/>
    <property type="match status" value="2"/>
</dbReference>
<dbReference type="SUPFAM" id="SSF53474">
    <property type="entry name" value="alpha/beta-Hydrolases"/>
    <property type="match status" value="1"/>
</dbReference>
<dbReference type="SUPFAM" id="SSF54631">
    <property type="entry name" value="CBS-domain pair"/>
    <property type="match status" value="1"/>
</dbReference>
<dbReference type="PROSITE" id="PS51371">
    <property type="entry name" value="CBS"/>
    <property type="match status" value="2"/>
</dbReference>
<organism>
    <name type="scientific">Methanobrevibacter ruminantium (strain ATCC 35063 / DSM 1093 / JCM 13430 / OCM 146 / M1)</name>
    <name type="common">Methanobacterium ruminantium</name>
    <dbReference type="NCBI Taxonomy" id="634498"/>
    <lineage>
        <taxon>Archaea</taxon>
        <taxon>Methanobacteriati</taxon>
        <taxon>Methanobacteriota</taxon>
        <taxon>Methanomada group</taxon>
        <taxon>Methanobacteria</taxon>
        <taxon>Methanobacteriales</taxon>
        <taxon>Methanobacteriaceae</taxon>
        <taxon>Methanobrevibacter</taxon>
    </lineage>
</organism>